<name>MXIJ_SHISO</name>
<keyword id="KW-0998">Cell outer membrane</keyword>
<keyword id="KW-0449">Lipoprotein</keyword>
<keyword id="KW-0472">Membrane</keyword>
<keyword id="KW-0564">Palmitate</keyword>
<keyword id="KW-0614">Plasmid</keyword>
<keyword id="KW-0653">Protein transport</keyword>
<keyword id="KW-0732">Signal</keyword>
<keyword id="KW-0813">Transport</keyword>
<keyword id="KW-0843">Virulence</keyword>
<dbReference type="EMBL" id="D50601">
    <property type="protein sequence ID" value="BAA09148.1"/>
    <property type="molecule type" value="Genomic_DNA"/>
</dbReference>
<dbReference type="RefSeq" id="WP_000621940.1">
    <property type="nucleotide sequence ID" value="NZ_WHSK01000208.1"/>
</dbReference>
<dbReference type="SMR" id="Q55288"/>
<dbReference type="STRING" id="216599.GCA_000283715_05230"/>
<dbReference type="OMA" id="MSIATCW"/>
<dbReference type="GO" id="GO:0009279">
    <property type="term" value="C:cell outer membrane"/>
    <property type="evidence" value="ECO:0007669"/>
    <property type="project" value="UniProtKB-SubCell"/>
</dbReference>
<dbReference type="GO" id="GO:0009306">
    <property type="term" value="P:protein secretion"/>
    <property type="evidence" value="ECO:0007669"/>
    <property type="project" value="InterPro"/>
</dbReference>
<dbReference type="Gene3D" id="3.30.300.30">
    <property type="match status" value="1"/>
</dbReference>
<dbReference type="Gene3D" id="3.30.70.1530">
    <property type="entry name" value="Hypothetical protein rpa1041"/>
    <property type="match status" value="1"/>
</dbReference>
<dbReference type="InterPro" id="IPR045851">
    <property type="entry name" value="AMP-bd_C_sf"/>
</dbReference>
<dbReference type="InterPro" id="IPR006182">
    <property type="entry name" value="FliF_N_dom"/>
</dbReference>
<dbReference type="InterPro" id="IPR003282">
    <property type="entry name" value="T3SS_SctJ"/>
</dbReference>
<dbReference type="InterPro" id="IPR043427">
    <property type="entry name" value="YscJ/FliF"/>
</dbReference>
<dbReference type="NCBIfam" id="TIGR02544">
    <property type="entry name" value="III_secr_YscJ"/>
    <property type="match status" value="1"/>
</dbReference>
<dbReference type="PANTHER" id="PTHR30046">
    <property type="entry name" value="FLAGELLAR M-RING PROTEIN"/>
    <property type="match status" value="1"/>
</dbReference>
<dbReference type="PANTHER" id="PTHR30046:SF3">
    <property type="entry name" value="SECRETION SYSTEM APPARATUS LIPOPROTEIN SSAJ"/>
    <property type="match status" value="1"/>
</dbReference>
<dbReference type="Pfam" id="PF01514">
    <property type="entry name" value="YscJ_FliF"/>
    <property type="match status" value="1"/>
</dbReference>
<dbReference type="PRINTS" id="PR01338">
    <property type="entry name" value="TYPE3OMKPROT"/>
</dbReference>
<dbReference type="PROSITE" id="PS51257">
    <property type="entry name" value="PROKAR_LIPOPROTEIN"/>
    <property type="match status" value="1"/>
</dbReference>
<reference key="1">
    <citation type="submission" date="1995-05" db="EMBL/GenBank/DDBJ databases">
        <title>Comparison and high conservation of nucleotide sequences of spa-mxi regions between S.sonnei and S.flexneri -- identification of a new gene coding plausible membrane protein.</title>
        <authorList>
            <person name="Arakawa E."/>
            <person name="Kato J."/>
            <person name="Ito K."/>
            <person name="Watanabe H."/>
        </authorList>
    </citation>
    <scope>NUCLEOTIDE SEQUENCE [GENOMIC DNA]</scope>
    <source>
        <strain>HW383</strain>
    </source>
</reference>
<protein>
    <recommendedName>
        <fullName>Lipoprotein MxiJ</fullName>
    </recommendedName>
</protein>
<geneLocation type="plasmid">
    <name>pINV</name>
</geneLocation>
<evidence type="ECO:0000255" key="1">
    <source>
        <dbReference type="PROSITE-ProRule" id="PRU00303"/>
    </source>
</evidence>
<evidence type="ECO:0000305" key="2"/>
<gene>
    <name type="primary">mxiJ</name>
</gene>
<organism>
    <name type="scientific">Shigella sonnei</name>
    <dbReference type="NCBI Taxonomy" id="624"/>
    <lineage>
        <taxon>Bacteria</taxon>
        <taxon>Pseudomonadati</taxon>
        <taxon>Pseudomonadota</taxon>
        <taxon>Gammaproteobacteria</taxon>
        <taxon>Enterobacterales</taxon>
        <taxon>Enterobacteriaceae</taxon>
        <taxon>Shigella</taxon>
    </lineage>
</organism>
<comment type="function">
    <text>Involved in the secretion of the Ipa antigens.</text>
</comment>
<comment type="subcellular location">
    <subcellularLocation>
        <location evidence="2">Cell outer membrane</location>
        <topology evidence="2">Lipid-anchor</topology>
    </subcellularLocation>
</comment>
<comment type="similarity">
    <text evidence="2">Belongs to the YscJ lipoprotein family.</text>
</comment>
<sequence length="241" mass="27523">MIRYKGFILFLLLMLIGCEQREELISNLSQRQANEIISVLERHNITARKVDGGKQGISVQVEKGTFASAVDLMRMYDLPNPERVDISQMFPTDSLVSSPRAEKARLYSAIEQRLEQSLVSIGGVISAKIHVSYDLEEKNISSKPMHISVIAIYDSPKESELLVSNIKRFLKNTFSDVKYENISVILTPKEEYVYTNVQPVKEIKSEFLTNEVIYLFLGMAVLVVILLVWAFKTGWFKRNKI</sequence>
<accession>Q55288</accession>
<feature type="signal peptide" evidence="1">
    <location>
        <begin position="1"/>
        <end position="17"/>
    </location>
</feature>
<feature type="chain" id="PRO_0000018224" description="Lipoprotein MxiJ">
    <location>
        <begin position="18"/>
        <end position="241"/>
    </location>
</feature>
<feature type="lipid moiety-binding region" description="N-palmitoyl cysteine" evidence="1">
    <location>
        <position position="18"/>
    </location>
</feature>
<feature type="lipid moiety-binding region" description="S-diacylglycerol cysteine" evidence="1">
    <location>
        <position position="18"/>
    </location>
</feature>
<proteinExistence type="inferred from homology"/>